<gene>
    <name evidence="1" type="primary">glgB</name>
    <name type="ordered locus">YPTB3787</name>
</gene>
<comment type="function">
    <text evidence="1">Catalyzes the formation of the alpha-1,6-glucosidic linkages in glycogen by scission of a 1,4-alpha-linked oligosaccharide from growing alpha-1,4-glucan chains and the subsequent attachment of the oligosaccharide to the alpha-1,6 position.</text>
</comment>
<comment type="catalytic activity">
    <reaction evidence="1">
        <text>Transfers a segment of a (1-&gt;4)-alpha-D-glucan chain to a primary hydroxy group in a similar glucan chain.</text>
        <dbReference type="EC" id="2.4.1.18"/>
    </reaction>
</comment>
<comment type="pathway">
    <text evidence="1">Glycan biosynthesis; glycogen biosynthesis.</text>
</comment>
<comment type="subunit">
    <text evidence="1">Monomer.</text>
</comment>
<comment type="similarity">
    <text evidence="1">Belongs to the glycosyl hydrolase 13 family. GlgB subfamily.</text>
</comment>
<accession>Q664I2</accession>
<proteinExistence type="inferred from homology"/>
<evidence type="ECO:0000255" key="1">
    <source>
        <dbReference type="HAMAP-Rule" id="MF_00685"/>
    </source>
</evidence>
<sequence length="727" mass="84108">MSVLPDRQVINQLISGHYGDPFSILGMHETSQGLQICALLPDAREVWLVETENGRRIAQLTLEDPRGFFIAQLTRRKKSFRYQFAVTWQESPQIIEDPYRFGPLLQDIDSWLLAEGTHLRPYERLGAHLMSLDGVSGVSFAVWAPNAQRVSVVGDFNFWDGRRHPMRLRRENGIWELFLPGIEAGQLYKFEIIDCHGQVRLKADPYAFEAQMRPETASLISPLPDVVKSSAARQKANDLCSPVSIYEVHLGSWRRHTDNNFWLSYRELADQLVEYVKYMGFTHVELLPINEHPFDGSWGYQPLGLYAPTRRYGTPEDFKAFVAKFHQAGINVILDWVPGHFPSDEHGLSTFDGTALYEYADPREGYHQDWNTLIYNYGRNEVRNYLAGNAFYWMERFGIDALRIDAVASMIYRDYSRAEGQWVPNYYGGRENLEAIAFLRYTNKTIGVERPGSVTMAEESTDFPGVTLPPDIGGLGFNYKWNMGWMHDTLNYMQCDPVHRKYHHNLMTFGMLYAYTENFILPLSHDEVVHGKRSILDRMPGDAWQKFANLRAYYAFMWAHPGKKLLFMGCEFAQGREWNFETSLDWHLLDDENGWHSGVQRLVRDLNHCYRQYAPLYEWDYQPAGFEWLVVDDHENSVFAFLRRDAEGHELIAISNFTPVPRYHYRVGIPQGGHYREVLNSDSAFYCGSNLGNQGGIDSHHVRSHNHEHSLLLTLPPLATIYLLREN</sequence>
<keyword id="KW-0119">Carbohydrate metabolism</keyword>
<keyword id="KW-0320">Glycogen biosynthesis</keyword>
<keyword id="KW-0321">Glycogen metabolism</keyword>
<keyword id="KW-0328">Glycosyltransferase</keyword>
<keyword id="KW-0808">Transferase</keyword>
<dbReference type="EC" id="2.4.1.18" evidence="1"/>
<dbReference type="EMBL" id="BX936398">
    <property type="protein sequence ID" value="CAH23025.1"/>
    <property type="molecule type" value="Genomic_DNA"/>
</dbReference>
<dbReference type="RefSeq" id="WP_011193251.1">
    <property type="nucleotide sequence ID" value="NC_006155.1"/>
</dbReference>
<dbReference type="SMR" id="Q664I2"/>
<dbReference type="CAZy" id="CBM48">
    <property type="family name" value="Carbohydrate-Binding Module Family 48"/>
</dbReference>
<dbReference type="CAZy" id="GH13">
    <property type="family name" value="Glycoside Hydrolase Family 13"/>
</dbReference>
<dbReference type="GeneID" id="49784216"/>
<dbReference type="KEGG" id="ypo:BZ17_2798"/>
<dbReference type="KEGG" id="yps:YPTB3787"/>
<dbReference type="PATRIC" id="fig|273123.14.peg.2932"/>
<dbReference type="UniPathway" id="UPA00164"/>
<dbReference type="Proteomes" id="UP000001011">
    <property type="component" value="Chromosome"/>
</dbReference>
<dbReference type="GO" id="GO:0005829">
    <property type="term" value="C:cytosol"/>
    <property type="evidence" value="ECO:0007669"/>
    <property type="project" value="TreeGrafter"/>
</dbReference>
<dbReference type="GO" id="GO:0003844">
    <property type="term" value="F:1,4-alpha-glucan branching enzyme activity"/>
    <property type="evidence" value="ECO:0007669"/>
    <property type="project" value="UniProtKB-UniRule"/>
</dbReference>
<dbReference type="GO" id="GO:0043169">
    <property type="term" value="F:cation binding"/>
    <property type="evidence" value="ECO:0007669"/>
    <property type="project" value="InterPro"/>
</dbReference>
<dbReference type="GO" id="GO:0004553">
    <property type="term" value="F:hydrolase activity, hydrolyzing O-glycosyl compounds"/>
    <property type="evidence" value="ECO:0007669"/>
    <property type="project" value="InterPro"/>
</dbReference>
<dbReference type="GO" id="GO:0005978">
    <property type="term" value="P:glycogen biosynthetic process"/>
    <property type="evidence" value="ECO:0007669"/>
    <property type="project" value="UniProtKB-UniRule"/>
</dbReference>
<dbReference type="CDD" id="cd11322">
    <property type="entry name" value="AmyAc_Glg_BE"/>
    <property type="match status" value="1"/>
</dbReference>
<dbReference type="CDD" id="cd02855">
    <property type="entry name" value="E_set_GBE_prok_N"/>
    <property type="match status" value="1"/>
</dbReference>
<dbReference type="FunFam" id="2.60.40.10:FF:000169">
    <property type="entry name" value="1,4-alpha-glucan branching enzyme GlgB"/>
    <property type="match status" value="1"/>
</dbReference>
<dbReference type="FunFam" id="2.60.40.1180:FF:000002">
    <property type="entry name" value="1,4-alpha-glucan branching enzyme GlgB"/>
    <property type="match status" value="1"/>
</dbReference>
<dbReference type="FunFam" id="3.20.20.80:FF:000003">
    <property type="entry name" value="1,4-alpha-glucan branching enzyme GlgB"/>
    <property type="match status" value="1"/>
</dbReference>
<dbReference type="Gene3D" id="3.20.20.80">
    <property type="entry name" value="Glycosidases"/>
    <property type="match status" value="1"/>
</dbReference>
<dbReference type="Gene3D" id="2.60.40.1180">
    <property type="entry name" value="Golgi alpha-mannosidase II"/>
    <property type="match status" value="1"/>
</dbReference>
<dbReference type="Gene3D" id="2.60.40.10">
    <property type="entry name" value="Immunoglobulins"/>
    <property type="match status" value="2"/>
</dbReference>
<dbReference type="HAMAP" id="MF_00685">
    <property type="entry name" value="GlgB"/>
    <property type="match status" value="1"/>
</dbReference>
<dbReference type="InterPro" id="IPR006048">
    <property type="entry name" value="A-amylase/branching_C"/>
</dbReference>
<dbReference type="InterPro" id="IPR037439">
    <property type="entry name" value="Branching_enzy"/>
</dbReference>
<dbReference type="InterPro" id="IPR006407">
    <property type="entry name" value="GlgB"/>
</dbReference>
<dbReference type="InterPro" id="IPR054169">
    <property type="entry name" value="GlgB_N"/>
</dbReference>
<dbReference type="InterPro" id="IPR044143">
    <property type="entry name" value="GlgB_N_E_set_prok"/>
</dbReference>
<dbReference type="InterPro" id="IPR006047">
    <property type="entry name" value="Glyco_hydro_13_cat_dom"/>
</dbReference>
<dbReference type="InterPro" id="IPR004193">
    <property type="entry name" value="Glyco_hydro_13_N"/>
</dbReference>
<dbReference type="InterPro" id="IPR013780">
    <property type="entry name" value="Glyco_hydro_b"/>
</dbReference>
<dbReference type="InterPro" id="IPR017853">
    <property type="entry name" value="Glycoside_hydrolase_SF"/>
</dbReference>
<dbReference type="InterPro" id="IPR013783">
    <property type="entry name" value="Ig-like_fold"/>
</dbReference>
<dbReference type="InterPro" id="IPR014756">
    <property type="entry name" value="Ig_E-set"/>
</dbReference>
<dbReference type="NCBIfam" id="TIGR01515">
    <property type="entry name" value="branching_enzym"/>
    <property type="match status" value="1"/>
</dbReference>
<dbReference type="NCBIfam" id="NF003811">
    <property type="entry name" value="PRK05402.1"/>
    <property type="match status" value="1"/>
</dbReference>
<dbReference type="NCBIfam" id="NF008967">
    <property type="entry name" value="PRK12313.1"/>
    <property type="match status" value="1"/>
</dbReference>
<dbReference type="PANTHER" id="PTHR43651">
    <property type="entry name" value="1,4-ALPHA-GLUCAN-BRANCHING ENZYME"/>
    <property type="match status" value="1"/>
</dbReference>
<dbReference type="PANTHER" id="PTHR43651:SF3">
    <property type="entry name" value="1,4-ALPHA-GLUCAN-BRANCHING ENZYME"/>
    <property type="match status" value="1"/>
</dbReference>
<dbReference type="Pfam" id="PF00128">
    <property type="entry name" value="Alpha-amylase"/>
    <property type="match status" value="1"/>
</dbReference>
<dbReference type="Pfam" id="PF02806">
    <property type="entry name" value="Alpha-amylase_C"/>
    <property type="match status" value="1"/>
</dbReference>
<dbReference type="Pfam" id="PF02922">
    <property type="entry name" value="CBM_48"/>
    <property type="match status" value="1"/>
</dbReference>
<dbReference type="Pfam" id="PF22019">
    <property type="entry name" value="GlgB_N"/>
    <property type="match status" value="1"/>
</dbReference>
<dbReference type="PIRSF" id="PIRSF000463">
    <property type="entry name" value="GlgB"/>
    <property type="match status" value="1"/>
</dbReference>
<dbReference type="SMART" id="SM00642">
    <property type="entry name" value="Aamy"/>
    <property type="match status" value="1"/>
</dbReference>
<dbReference type="SUPFAM" id="SSF51445">
    <property type="entry name" value="(Trans)glycosidases"/>
    <property type="match status" value="1"/>
</dbReference>
<dbReference type="SUPFAM" id="SSF81296">
    <property type="entry name" value="E set domains"/>
    <property type="match status" value="2"/>
</dbReference>
<dbReference type="SUPFAM" id="SSF51011">
    <property type="entry name" value="Glycosyl hydrolase domain"/>
    <property type="match status" value="1"/>
</dbReference>
<organism>
    <name type="scientific">Yersinia pseudotuberculosis serotype I (strain IP32953)</name>
    <dbReference type="NCBI Taxonomy" id="273123"/>
    <lineage>
        <taxon>Bacteria</taxon>
        <taxon>Pseudomonadati</taxon>
        <taxon>Pseudomonadota</taxon>
        <taxon>Gammaproteobacteria</taxon>
        <taxon>Enterobacterales</taxon>
        <taxon>Yersiniaceae</taxon>
        <taxon>Yersinia</taxon>
    </lineage>
</organism>
<reference key="1">
    <citation type="journal article" date="2004" name="Proc. Natl. Acad. Sci. U.S.A.">
        <title>Insights into the evolution of Yersinia pestis through whole-genome comparison with Yersinia pseudotuberculosis.</title>
        <authorList>
            <person name="Chain P.S.G."/>
            <person name="Carniel E."/>
            <person name="Larimer F.W."/>
            <person name="Lamerdin J."/>
            <person name="Stoutland P.O."/>
            <person name="Regala W.M."/>
            <person name="Georgescu A.M."/>
            <person name="Vergez L.M."/>
            <person name="Land M.L."/>
            <person name="Motin V.L."/>
            <person name="Brubaker R.R."/>
            <person name="Fowler J."/>
            <person name="Hinnebusch J."/>
            <person name="Marceau M."/>
            <person name="Medigue C."/>
            <person name="Simonet M."/>
            <person name="Chenal-Francisque V."/>
            <person name="Souza B."/>
            <person name="Dacheux D."/>
            <person name="Elliott J.M."/>
            <person name="Derbise A."/>
            <person name="Hauser L.J."/>
            <person name="Garcia E."/>
        </authorList>
    </citation>
    <scope>NUCLEOTIDE SEQUENCE [LARGE SCALE GENOMIC DNA]</scope>
    <source>
        <strain>IP32953</strain>
    </source>
</reference>
<name>GLGB_YERPS</name>
<feature type="chain" id="PRO_0000188771" description="1,4-alpha-glucan branching enzyme GlgB">
    <location>
        <begin position="1"/>
        <end position="727"/>
    </location>
</feature>
<feature type="active site" description="Nucleophile" evidence="1">
    <location>
        <position position="405"/>
    </location>
</feature>
<feature type="active site" description="Proton donor" evidence="1">
    <location>
        <position position="458"/>
    </location>
</feature>
<protein>
    <recommendedName>
        <fullName evidence="1">1,4-alpha-glucan branching enzyme GlgB</fullName>
        <ecNumber evidence="1">2.4.1.18</ecNumber>
    </recommendedName>
    <alternativeName>
        <fullName evidence="1">1,4-alpha-D-glucan:1,4-alpha-D-glucan 6-glucosyl-transferase</fullName>
    </alternativeName>
    <alternativeName>
        <fullName evidence="1">Alpha-(1-&gt;4)-glucan branching enzyme</fullName>
    </alternativeName>
    <alternativeName>
        <fullName evidence="1">Glycogen branching enzyme</fullName>
        <shortName evidence="1">BE</shortName>
    </alternativeName>
</protein>